<gene>
    <name type="primary">CAL</name>
</gene>
<name>CATR_GIAIN</name>
<reference key="1">
    <citation type="journal article" date="1996" name="Mol. Biochem. Parasitol.">
        <title>Immunolocalization and sequence of caltractin/centrin from the early branching eukaryote Giardia lamblia.</title>
        <authorList>
            <person name="Meng T.C."/>
            <person name="Aley S.B."/>
            <person name="Svard S.G."/>
            <person name="Smith M.W."/>
            <person name="Huang B."/>
            <person name="Kim J."/>
            <person name="Gillin F.D."/>
        </authorList>
    </citation>
    <scope>NUCLEOTIDE SEQUENCE [GENOMIC DNA]</scope>
    <source>
        <strain>ATCC 30957 / WB</strain>
    </source>
</reference>
<protein>
    <recommendedName>
        <fullName>Caltractin</fullName>
    </recommendedName>
    <alternativeName>
        <fullName>Centrin</fullName>
    </alternativeName>
</protein>
<comment type="function">
    <text>Plays a fundamental role in microtubule-organizing center structure and function.</text>
</comment>
<comment type="subunit">
    <text evidence="1">Monomer.</text>
</comment>
<comment type="subcellular location">
    <subcellularLocation>
        <location>Cytoplasm</location>
        <location>Cytoskeleton</location>
        <location>Microtubule organizing center</location>
        <location>Centrosome</location>
    </subcellularLocation>
    <text>Centrosome of interphase and mitotic cells.</text>
</comment>
<comment type="miscellaneous">
    <text evidence="1">Binds two moles of calcium per mole of protein.</text>
</comment>
<comment type="similarity">
    <text evidence="4">Belongs to the centrin family.</text>
</comment>
<dbReference type="EMBL" id="U42428">
    <property type="protein sequence ID" value="AAB05594.1"/>
    <property type="molecule type" value="Genomic_DNA"/>
</dbReference>
<dbReference type="SMR" id="Q24956"/>
<dbReference type="VEuPathDB" id="GiardiaDB:DHA2_104685"/>
<dbReference type="VEuPathDB" id="GiardiaDB:GL50581_3112"/>
<dbReference type="VEuPathDB" id="GiardiaDB:GL50803_00104685"/>
<dbReference type="VEuPathDB" id="GiardiaDB:QR46_4256"/>
<dbReference type="eggNOG" id="KOG0028">
    <property type="taxonomic scope" value="Eukaryota"/>
</dbReference>
<dbReference type="GO" id="GO:0005813">
    <property type="term" value="C:centrosome"/>
    <property type="evidence" value="ECO:0007669"/>
    <property type="project" value="UniProtKB-SubCell"/>
</dbReference>
<dbReference type="GO" id="GO:0005737">
    <property type="term" value="C:cytoplasm"/>
    <property type="evidence" value="ECO:0007669"/>
    <property type="project" value="UniProtKB-KW"/>
</dbReference>
<dbReference type="GO" id="GO:0016460">
    <property type="term" value="C:myosin II complex"/>
    <property type="evidence" value="ECO:0007669"/>
    <property type="project" value="TreeGrafter"/>
</dbReference>
<dbReference type="GO" id="GO:0005509">
    <property type="term" value="F:calcium ion binding"/>
    <property type="evidence" value="ECO:0007669"/>
    <property type="project" value="InterPro"/>
</dbReference>
<dbReference type="GO" id="GO:0051301">
    <property type="term" value="P:cell division"/>
    <property type="evidence" value="ECO:0007669"/>
    <property type="project" value="UniProtKB-KW"/>
</dbReference>
<dbReference type="CDD" id="cd00051">
    <property type="entry name" value="EFh"/>
    <property type="match status" value="2"/>
</dbReference>
<dbReference type="FunFam" id="1.10.238.10:FF:000077">
    <property type="entry name" value="Centrin 1"/>
    <property type="match status" value="1"/>
</dbReference>
<dbReference type="Gene3D" id="1.10.238.10">
    <property type="entry name" value="EF-hand"/>
    <property type="match status" value="2"/>
</dbReference>
<dbReference type="InterPro" id="IPR050230">
    <property type="entry name" value="CALM/Myosin/TropC-like"/>
</dbReference>
<dbReference type="InterPro" id="IPR011992">
    <property type="entry name" value="EF-hand-dom_pair"/>
</dbReference>
<dbReference type="InterPro" id="IPR018247">
    <property type="entry name" value="EF_Hand_1_Ca_BS"/>
</dbReference>
<dbReference type="InterPro" id="IPR002048">
    <property type="entry name" value="EF_hand_dom"/>
</dbReference>
<dbReference type="PANTHER" id="PTHR23048:SF48">
    <property type="entry name" value="CENTRIN 3"/>
    <property type="match status" value="1"/>
</dbReference>
<dbReference type="PANTHER" id="PTHR23048">
    <property type="entry name" value="MYOSIN LIGHT CHAIN 1, 3"/>
    <property type="match status" value="1"/>
</dbReference>
<dbReference type="Pfam" id="PF13499">
    <property type="entry name" value="EF-hand_7"/>
    <property type="match status" value="2"/>
</dbReference>
<dbReference type="SMART" id="SM00054">
    <property type="entry name" value="EFh"/>
    <property type="match status" value="4"/>
</dbReference>
<dbReference type="SUPFAM" id="SSF47473">
    <property type="entry name" value="EF-hand"/>
    <property type="match status" value="1"/>
</dbReference>
<dbReference type="PROSITE" id="PS00018">
    <property type="entry name" value="EF_HAND_1"/>
    <property type="match status" value="2"/>
</dbReference>
<dbReference type="PROSITE" id="PS50222">
    <property type="entry name" value="EF_HAND_2"/>
    <property type="match status" value="4"/>
</dbReference>
<proteinExistence type="inferred from homology"/>
<accession>Q24956</accession>
<evidence type="ECO:0000250" key="1"/>
<evidence type="ECO:0000255" key="2">
    <source>
        <dbReference type="PROSITE-ProRule" id="PRU00448"/>
    </source>
</evidence>
<evidence type="ECO:0000256" key="3">
    <source>
        <dbReference type="SAM" id="MobiDB-lite"/>
    </source>
</evidence>
<evidence type="ECO:0000305" key="4"/>
<feature type="chain" id="PRO_0000073565" description="Caltractin">
    <location>
        <begin position="1"/>
        <end position="176"/>
    </location>
</feature>
<feature type="domain" description="EF-hand 1" evidence="2">
    <location>
        <begin position="31"/>
        <end position="66"/>
    </location>
</feature>
<feature type="domain" description="EF-hand 2" evidence="2">
    <location>
        <begin position="67"/>
        <end position="102"/>
    </location>
</feature>
<feature type="domain" description="EF-hand 3" evidence="2">
    <location>
        <begin position="104"/>
        <end position="139"/>
    </location>
</feature>
<feature type="domain" description="EF-hand 4" evidence="2">
    <location>
        <begin position="140"/>
        <end position="175"/>
    </location>
</feature>
<feature type="region of interest" description="Disordered" evidence="3">
    <location>
        <begin position="1"/>
        <end position="27"/>
    </location>
</feature>
<feature type="binding site" evidence="2">
    <location>
        <position position="44"/>
    </location>
    <ligand>
        <name>Ca(2+)</name>
        <dbReference type="ChEBI" id="CHEBI:29108"/>
        <label>1</label>
    </ligand>
</feature>
<feature type="binding site" evidence="2">
    <location>
        <position position="46"/>
    </location>
    <ligand>
        <name>Ca(2+)</name>
        <dbReference type="ChEBI" id="CHEBI:29108"/>
        <label>1</label>
    </ligand>
</feature>
<feature type="binding site" evidence="2">
    <location>
        <position position="48"/>
    </location>
    <ligand>
        <name>Ca(2+)</name>
        <dbReference type="ChEBI" id="CHEBI:29108"/>
        <label>1</label>
    </ligand>
</feature>
<feature type="binding site" evidence="2">
    <location>
        <position position="50"/>
    </location>
    <ligand>
        <name>Ca(2+)</name>
        <dbReference type="ChEBI" id="CHEBI:29108"/>
        <label>1</label>
    </ligand>
</feature>
<feature type="binding site" evidence="2">
    <location>
        <position position="55"/>
    </location>
    <ligand>
        <name>Ca(2+)</name>
        <dbReference type="ChEBI" id="CHEBI:29108"/>
        <label>1</label>
    </ligand>
</feature>
<feature type="binding site" evidence="2">
    <location>
        <position position="153"/>
    </location>
    <ligand>
        <name>Ca(2+)</name>
        <dbReference type="ChEBI" id="CHEBI:29108"/>
        <label>2</label>
    </ligand>
</feature>
<feature type="binding site" evidence="2">
    <location>
        <position position="155"/>
    </location>
    <ligand>
        <name>Ca(2+)</name>
        <dbReference type="ChEBI" id="CHEBI:29108"/>
        <label>2</label>
    </ligand>
</feature>
<feature type="binding site" evidence="2">
    <location>
        <position position="157"/>
    </location>
    <ligand>
        <name>Ca(2+)</name>
        <dbReference type="ChEBI" id="CHEBI:29108"/>
        <label>2</label>
    </ligand>
</feature>
<feature type="binding site" evidence="2">
    <location>
        <position position="159"/>
    </location>
    <ligand>
        <name>Ca(2+)</name>
        <dbReference type="ChEBI" id="CHEBI:29108"/>
        <label>2</label>
    </ligand>
</feature>
<feature type="binding site" evidence="2">
    <location>
        <position position="164"/>
    </location>
    <ligand>
        <name>Ca(2+)</name>
        <dbReference type="ChEBI" id="CHEBI:29108"/>
        <label>2</label>
    </ligand>
</feature>
<sequence length="176" mass="20238">MNRAAIAAGKPSGSISTGKPRRKTRAEVSEEMKHEIREAFDLFDADRSGRIDFHELKVAMRALGFDVKKEEIQRIMNEYDRDQLGEITFQDFEEVMIEKISNRDPTEEILKAFRLFDDDATGRISLKNLRRVAKELSENISDEELLAMIQEFDRDGDGEIDEEDFIAILRSTSAFS</sequence>
<organism>
    <name type="scientific">Giardia intestinalis</name>
    <name type="common">Giardia lamblia</name>
    <dbReference type="NCBI Taxonomy" id="5741"/>
    <lineage>
        <taxon>Eukaryota</taxon>
        <taxon>Metamonada</taxon>
        <taxon>Diplomonadida</taxon>
        <taxon>Hexamitidae</taxon>
        <taxon>Giardiinae</taxon>
        <taxon>Giardia</taxon>
    </lineage>
</organism>
<keyword id="KW-0106">Calcium</keyword>
<keyword id="KW-0131">Cell cycle</keyword>
<keyword id="KW-0132">Cell division</keyword>
<keyword id="KW-0963">Cytoplasm</keyword>
<keyword id="KW-0206">Cytoskeleton</keyword>
<keyword id="KW-0479">Metal-binding</keyword>
<keyword id="KW-0498">Mitosis</keyword>
<keyword id="KW-0677">Repeat</keyword>